<comment type="similarity">
    <text evidence="1">Belongs to the UPF0173 family.</text>
</comment>
<feature type="chain" id="PRO_1000081127" description="UPF0173 metal-dependent hydrolase SaurJH1_1797">
    <location>
        <begin position="1"/>
        <end position="229"/>
    </location>
</feature>
<proteinExistence type="inferred from homology"/>
<protein>
    <recommendedName>
        <fullName evidence="1">UPF0173 metal-dependent hydrolase SaurJH1_1797</fullName>
    </recommendedName>
</protein>
<name>Y1797_STAA2</name>
<dbReference type="EMBL" id="CP000736">
    <property type="protein sequence ID" value="ABR52641.1"/>
    <property type="molecule type" value="Genomic_DNA"/>
</dbReference>
<dbReference type="SMR" id="A6U2H3"/>
<dbReference type="KEGG" id="sah:SaurJH1_1797"/>
<dbReference type="HOGENOM" id="CLU_070010_4_1_9"/>
<dbReference type="GO" id="GO:0016787">
    <property type="term" value="F:hydrolase activity"/>
    <property type="evidence" value="ECO:0007669"/>
    <property type="project" value="UniProtKB-UniRule"/>
</dbReference>
<dbReference type="CDD" id="cd06262">
    <property type="entry name" value="metallo-hydrolase-like_MBL-fold"/>
    <property type="match status" value="1"/>
</dbReference>
<dbReference type="Gene3D" id="3.60.15.10">
    <property type="entry name" value="Ribonuclease Z/Hydroxyacylglutathione hydrolase-like"/>
    <property type="match status" value="1"/>
</dbReference>
<dbReference type="HAMAP" id="MF_00457">
    <property type="entry name" value="UPF0173"/>
    <property type="match status" value="1"/>
</dbReference>
<dbReference type="InterPro" id="IPR001279">
    <property type="entry name" value="Metallo-B-lactamas"/>
</dbReference>
<dbReference type="InterPro" id="IPR036866">
    <property type="entry name" value="RibonucZ/Hydroxyglut_hydro"/>
</dbReference>
<dbReference type="InterPro" id="IPR022877">
    <property type="entry name" value="UPF0173"/>
</dbReference>
<dbReference type="InterPro" id="IPR050114">
    <property type="entry name" value="UPF0173_UPF0282_UlaG_hydrolase"/>
</dbReference>
<dbReference type="NCBIfam" id="NF001911">
    <property type="entry name" value="PRK00685.1"/>
    <property type="match status" value="1"/>
</dbReference>
<dbReference type="PANTHER" id="PTHR43546:SF3">
    <property type="entry name" value="UPF0173 METAL-DEPENDENT HYDROLASE MJ1163"/>
    <property type="match status" value="1"/>
</dbReference>
<dbReference type="PANTHER" id="PTHR43546">
    <property type="entry name" value="UPF0173 METAL-DEPENDENT HYDROLASE MJ1163-RELATED"/>
    <property type="match status" value="1"/>
</dbReference>
<dbReference type="Pfam" id="PF12706">
    <property type="entry name" value="Lactamase_B_2"/>
    <property type="match status" value="1"/>
</dbReference>
<dbReference type="SMART" id="SM00849">
    <property type="entry name" value="Lactamase_B"/>
    <property type="match status" value="1"/>
</dbReference>
<dbReference type="SUPFAM" id="SSF56281">
    <property type="entry name" value="Metallo-hydrolase/oxidoreductase"/>
    <property type="match status" value="1"/>
</dbReference>
<keyword id="KW-0378">Hydrolase</keyword>
<accession>A6U2H3</accession>
<organism>
    <name type="scientific">Staphylococcus aureus (strain JH1)</name>
    <dbReference type="NCBI Taxonomy" id="359787"/>
    <lineage>
        <taxon>Bacteria</taxon>
        <taxon>Bacillati</taxon>
        <taxon>Bacillota</taxon>
        <taxon>Bacilli</taxon>
        <taxon>Bacillales</taxon>
        <taxon>Staphylococcaceae</taxon>
        <taxon>Staphylococcus</taxon>
    </lineage>
</organism>
<gene>
    <name type="ordered locus">SaurJH1_1797</name>
</gene>
<reference key="1">
    <citation type="submission" date="2007-06" db="EMBL/GenBank/DDBJ databases">
        <title>Complete sequence of chromosome of Staphylococcus aureus subsp. aureus JH1.</title>
        <authorList>
            <consortium name="US DOE Joint Genome Institute"/>
            <person name="Copeland A."/>
            <person name="Lucas S."/>
            <person name="Lapidus A."/>
            <person name="Barry K."/>
            <person name="Detter J.C."/>
            <person name="Glavina del Rio T."/>
            <person name="Hammon N."/>
            <person name="Israni S."/>
            <person name="Dalin E."/>
            <person name="Tice H."/>
            <person name="Pitluck S."/>
            <person name="Chain P."/>
            <person name="Malfatti S."/>
            <person name="Shin M."/>
            <person name="Vergez L."/>
            <person name="Schmutz J."/>
            <person name="Larimer F."/>
            <person name="Land M."/>
            <person name="Hauser L."/>
            <person name="Kyrpides N."/>
            <person name="Ivanova N."/>
            <person name="Tomasz A."/>
            <person name="Richardson P."/>
        </authorList>
    </citation>
    <scope>NUCLEOTIDE SEQUENCE [LARGE SCALE GENOMIC DNA]</scope>
    <source>
        <strain>JH1</strain>
    </source>
</reference>
<sequence length="229" mass="25251">MKLSFHGQSTIYLEGNNKKVIVDPFISNNPKCDLNIETVQVDYIVLTHGHFDHFGDVVELAKKTGATVIGSAEMADYLSSYHGVENVHGMNIGGKANFDFGSVKFVQAFHSSSFTHENGIPVYLGMPMGIVFEVEGKTIYHTGDTGLFSDMSLIAKRHPVDVCFVPIGDNFTMGIDDASYAINEFIKPKISVPIHYDTFPLIEQDPQQFKDAVNVGDVQILKPGESVQF</sequence>
<evidence type="ECO:0000255" key="1">
    <source>
        <dbReference type="HAMAP-Rule" id="MF_00457"/>
    </source>
</evidence>